<protein>
    <recommendedName>
        <fullName evidence="1">Undecaprenyl-phosphate 4-deoxy-4-formamido-L-arabinose transferase</fullName>
        <ecNumber evidence="1">2.4.2.53</ecNumber>
    </recommendedName>
    <alternativeName>
        <fullName evidence="1">Undecaprenyl-phosphate Ara4FN transferase</fullName>
        <shortName evidence="1">Ara4FN transferase</shortName>
    </alternativeName>
</protein>
<proteinExistence type="inferred from homology"/>
<gene>
    <name evidence="1" type="primary">arnC</name>
    <name type="ordered locus">SeSA_A2526</name>
</gene>
<organism>
    <name type="scientific">Salmonella schwarzengrund (strain CVM19633)</name>
    <dbReference type="NCBI Taxonomy" id="439843"/>
    <lineage>
        <taxon>Bacteria</taxon>
        <taxon>Pseudomonadati</taxon>
        <taxon>Pseudomonadota</taxon>
        <taxon>Gammaproteobacteria</taxon>
        <taxon>Enterobacterales</taxon>
        <taxon>Enterobacteriaceae</taxon>
        <taxon>Salmonella</taxon>
    </lineage>
</organism>
<accession>B4TPI1</accession>
<reference key="1">
    <citation type="journal article" date="2011" name="J. Bacteriol.">
        <title>Comparative genomics of 28 Salmonella enterica isolates: evidence for CRISPR-mediated adaptive sublineage evolution.</title>
        <authorList>
            <person name="Fricke W.F."/>
            <person name="Mammel M.K."/>
            <person name="McDermott P.F."/>
            <person name="Tartera C."/>
            <person name="White D.G."/>
            <person name="Leclerc J.E."/>
            <person name="Ravel J."/>
            <person name="Cebula T.A."/>
        </authorList>
    </citation>
    <scope>NUCLEOTIDE SEQUENCE [LARGE SCALE GENOMIC DNA]</scope>
    <source>
        <strain>CVM19633</strain>
    </source>
</reference>
<comment type="function">
    <text evidence="1">Catalyzes the transfer of 4-deoxy-4-formamido-L-arabinose from UDP to undecaprenyl phosphate. The modified arabinose is attached to lipid A and is required for resistance to polymyxin and cationic antimicrobial peptides.</text>
</comment>
<comment type="catalytic activity">
    <reaction evidence="1">
        <text>UDP-4-deoxy-4-formamido-beta-L-arabinose + di-trans,octa-cis-undecaprenyl phosphate = 4-deoxy-4-formamido-alpha-L-arabinopyranosyl di-trans,octa-cis-undecaprenyl phosphate + UDP</text>
        <dbReference type="Rhea" id="RHEA:27722"/>
        <dbReference type="ChEBI" id="CHEBI:58223"/>
        <dbReference type="ChEBI" id="CHEBI:58709"/>
        <dbReference type="ChEBI" id="CHEBI:58909"/>
        <dbReference type="ChEBI" id="CHEBI:60392"/>
        <dbReference type="EC" id="2.4.2.53"/>
    </reaction>
</comment>
<comment type="pathway">
    <text evidence="1">Glycolipid biosynthesis; 4-amino-4-deoxy-alpha-L-arabinose undecaprenyl phosphate biosynthesis; 4-amino-4-deoxy-alpha-L-arabinose undecaprenyl phosphate from UDP-4-deoxy-4-formamido-beta-L-arabinose and undecaprenyl phosphate: step 1/2.</text>
</comment>
<comment type="pathway">
    <text evidence="1">Bacterial outer membrane biogenesis; lipopolysaccharide biosynthesis.</text>
</comment>
<comment type="subcellular location">
    <subcellularLocation>
        <location evidence="1">Cell inner membrane</location>
        <topology evidence="1">Multi-pass membrane protein</topology>
    </subcellularLocation>
</comment>
<comment type="similarity">
    <text evidence="1">Belongs to the glycosyltransferase 2 family.</text>
</comment>
<keyword id="KW-0046">Antibiotic resistance</keyword>
<keyword id="KW-0997">Cell inner membrane</keyword>
<keyword id="KW-1003">Cell membrane</keyword>
<keyword id="KW-0328">Glycosyltransferase</keyword>
<keyword id="KW-0441">Lipid A biosynthesis</keyword>
<keyword id="KW-0444">Lipid biosynthesis</keyword>
<keyword id="KW-0443">Lipid metabolism</keyword>
<keyword id="KW-0448">Lipopolysaccharide biosynthesis</keyword>
<keyword id="KW-0472">Membrane</keyword>
<keyword id="KW-0808">Transferase</keyword>
<keyword id="KW-0812">Transmembrane</keyword>
<keyword id="KW-1133">Transmembrane helix</keyword>
<evidence type="ECO:0000255" key="1">
    <source>
        <dbReference type="HAMAP-Rule" id="MF_01164"/>
    </source>
</evidence>
<feature type="chain" id="PRO_1000137924" description="Undecaprenyl-phosphate 4-deoxy-4-formamido-L-arabinose transferase">
    <location>
        <begin position="1"/>
        <end position="327"/>
    </location>
</feature>
<feature type="topological domain" description="Cytoplasmic" evidence="1">
    <location>
        <begin position="1"/>
        <end position="235"/>
    </location>
</feature>
<feature type="transmembrane region" description="Helical" evidence="1">
    <location>
        <begin position="236"/>
        <end position="256"/>
    </location>
</feature>
<feature type="topological domain" description="Periplasmic" evidence="1">
    <location>
        <begin position="257"/>
        <end position="269"/>
    </location>
</feature>
<feature type="transmembrane region" description="Helical" evidence="1">
    <location>
        <begin position="270"/>
        <end position="290"/>
    </location>
</feature>
<feature type="topological domain" description="Cytoplasmic" evidence="1">
    <location>
        <begin position="291"/>
        <end position="327"/>
    </location>
</feature>
<sequence length="327" mass="36516">MFDAAPIKKVSVVIPVYNEQESLPELIRRTTTACESLGKAWEILLIDDGSSDSSAELMVKASQEADSHIISILLNRNYGQHAAIMAGFSHVSGDLIITLDADLQNPPEEIPRLVAKADEGFDVVGTVRQNRQDSLFRKSASKIINLLIQRTTGKAMGDYGCMLRAYRRPIIDTMLRCHERSTFIPILANIFARRATEIPVHHAEREFGDSKYSFMRLINLMYDLVTCLTTTPLRLLSLLGSVIAIGGFSLSVLLIVLRLALGPQWAAEGVFMLFAVLFTFIGAQFIGMGLLGEYIGRIYNDVRARPRYFVQQVIYPESTPFTEESHQ</sequence>
<dbReference type="EC" id="2.4.2.53" evidence="1"/>
<dbReference type="EMBL" id="CP001127">
    <property type="protein sequence ID" value="ACF90079.1"/>
    <property type="molecule type" value="Genomic_DNA"/>
</dbReference>
<dbReference type="RefSeq" id="WP_000458893.1">
    <property type="nucleotide sequence ID" value="NC_011094.1"/>
</dbReference>
<dbReference type="SMR" id="B4TPI1"/>
<dbReference type="CAZy" id="GT2">
    <property type="family name" value="Glycosyltransferase Family 2"/>
</dbReference>
<dbReference type="KEGG" id="sew:SeSA_A2526"/>
<dbReference type="HOGENOM" id="CLU_033536_0_0_6"/>
<dbReference type="UniPathway" id="UPA00030"/>
<dbReference type="UniPathway" id="UPA00036">
    <property type="reaction ID" value="UER00495"/>
</dbReference>
<dbReference type="Proteomes" id="UP000001865">
    <property type="component" value="Chromosome"/>
</dbReference>
<dbReference type="GO" id="GO:0005886">
    <property type="term" value="C:plasma membrane"/>
    <property type="evidence" value="ECO:0007669"/>
    <property type="project" value="UniProtKB-SubCell"/>
</dbReference>
<dbReference type="GO" id="GO:0016780">
    <property type="term" value="F:phosphotransferase activity, for other substituted phosphate groups"/>
    <property type="evidence" value="ECO:0007669"/>
    <property type="project" value="UniProtKB-UniRule"/>
</dbReference>
<dbReference type="GO" id="GO:0099621">
    <property type="term" value="F:undecaprenyl-phosphate 4-deoxy-4-formamido-L-arabinose transferase activity"/>
    <property type="evidence" value="ECO:0007669"/>
    <property type="project" value="UniProtKB-EC"/>
</dbReference>
<dbReference type="GO" id="GO:0036108">
    <property type="term" value="P:4-amino-4-deoxy-alpha-L-arabinopyranosyl undecaprenyl phosphate biosynthetic process"/>
    <property type="evidence" value="ECO:0007669"/>
    <property type="project" value="UniProtKB-UniRule"/>
</dbReference>
<dbReference type="GO" id="GO:0009245">
    <property type="term" value="P:lipid A biosynthetic process"/>
    <property type="evidence" value="ECO:0007669"/>
    <property type="project" value="UniProtKB-UniRule"/>
</dbReference>
<dbReference type="GO" id="GO:0009103">
    <property type="term" value="P:lipopolysaccharide biosynthetic process"/>
    <property type="evidence" value="ECO:0007669"/>
    <property type="project" value="UniProtKB-UniRule"/>
</dbReference>
<dbReference type="GO" id="GO:0046677">
    <property type="term" value="P:response to antibiotic"/>
    <property type="evidence" value="ECO:0007669"/>
    <property type="project" value="UniProtKB-KW"/>
</dbReference>
<dbReference type="CDD" id="cd04187">
    <property type="entry name" value="DPM1_like_bac"/>
    <property type="match status" value="1"/>
</dbReference>
<dbReference type="FunFam" id="3.90.550.10:FF:000019">
    <property type="entry name" value="Undecaprenyl-phosphate 4-deoxy-4-formamido-L-arabinose transferase"/>
    <property type="match status" value="1"/>
</dbReference>
<dbReference type="Gene3D" id="3.90.550.10">
    <property type="entry name" value="Spore Coat Polysaccharide Biosynthesis Protein SpsA, Chain A"/>
    <property type="match status" value="1"/>
</dbReference>
<dbReference type="HAMAP" id="MF_01164">
    <property type="entry name" value="ArnC_transfer"/>
    <property type="match status" value="1"/>
</dbReference>
<dbReference type="InterPro" id="IPR022857">
    <property type="entry name" value="ArnC_tfrase"/>
</dbReference>
<dbReference type="InterPro" id="IPR001173">
    <property type="entry name" value="Glyco_trans_2-like"/>
</dbReference>
<dbReference type="InterPro" id="IPR050256">
    <property type="entry name" value="Glycosyltransferase_2"/>
</dbReference>
<dbReference type="InterPro" id="IPR029044">
    <property type="entry name" value="Nucleotide-diphossugar_trans"/>
</dbReference>
<dbReference type="NCBIfam" id="NF007986">
    <property type="entry name" value="PRK10714.1"/>
    <property type="match status" value="1"/>
</dbReference>
<dbReference type="PANTHER" id="PTHR48090:SF3">
    <property type="entry name" value="UNDECAPRENYL-PHOSPHATE 4-DEOXY-4-FORMAMIDO-L-ARABINOSE TRANSFERASE"/>
    <property type="match status" value="1"/>
</dbReference>
<dbReference type="PANTHER" id="PTHR48090">
    <property type="entry name" value="UNDECAPRENYL-PHOSPHATE 4-DEOXY-4-FORMAMIDO-L-ARABINOSE TRANSFERASE-RELATED"/>
    <property type="match status" value="1"/>
</dbReference>
<dbReference type="Pfam" id="PF00535">
    <property type="entry name" value="Glycos_transf_2"/>
    <property type="match status" value="1"/>
</dbReference>
<dbReference type="SUPFAM" id="SSF53448">
    <property type="entry name" value="Nucleotide-diphospho-sugar transferases"/>
    <property type="match status" value="1"/>
</dbReference>
<name>ARNC_SALSV</name>